<accession>P9WI46</accession>
<accession>L0T342</accession>
<accession>Q79FZ4</accession>
<accession>Q7DA58</accession>
<feature type="chain" id="PRO_0000428070" description="PPE family protein PPE2">
    <location>
        <begin position="1"/>
        <end position="556"/>
    </location>
</feature>
<feature type="region of interest" description="PPE" evidence="1">
    <location>
        <begin position="8"/>
        <end position="164"/>
    </location>
</feature>
<feature type="region of interest" description="SH3-like" evidence="1">
    <location>
        <begin position="201"/>
        <end position="256"/>
    </location>
</feature>
<feature type="region of interest" description="Leucine zipper motif" evidence="1">
    <location>
        <begin position="319"/>
        <end position="340"/>
    </location>
</feature>
<feature type="region of interest" description="Disordered" evidence="2">
    <location>
        <begin position="385"/>
        <end position="418"/>
    </location>
</feature>
<feature type="region of interest" description="Disordered" evidence="2">
    <location>
        <begin position="443"/>
        <end position="556"/>
    </location>
</feature>
<feature type="short sequence motif" description="Nuclear localization signal" evidence="1">
    <location>
        <begin position="473"/>
        <end position="481"/>
    </location>
</feature>
<feature type="compositionally biased region" description="Pro residues" evidence="2">
    <location>
        <begin position="400"/>
        <end position="417"/>
    </location>
</feature>
<feature type="compositionally biased region" description="Low complexity" evidence="2">
    <location>
        <begin position="456"/>
        <end position="471"/>
    </location>
</feature>
<feature type="compositionally biased region" description="Basic residues" evidence="2">
    <location>
        <begin position="472"/>
        <end position="481"/>
    </location>
</feature>
<dbReference type="EMBL" id="AE000516">
    <property type="protein sequence ID" value="AAK44487.1"/>
    <property type="molecule type" value="Genomic_DNA"/>
</dbReference>
<dbReference type="PIR" id="D70940">
    <property type="entry name" value="D70940"/>
</dbReference>
<dbReference type="RefSeq" id="WP_010924211.1">
    <property type="nucleotide sequence ID" value="NC_002755.2"/>
</dbReference>
<dbReference type="SMR" id="P9WI46"/>
<dbReference type="KEGG" id="mtc:MT0269"/>
<dbReference type="HOGENOM" id="CLU_000243_5_2_11"/>
<dbReference type="Proteomes" id="UP000001020">
    <property type="component" value="Chromosome"/>
</dbReference>
<dbReference type="GO" id="GO:0005576">
    <property type="term" value="C:extracellular region"/>
    <property type="evidence" value="ECO:0007669"/>
    <property type="project" value="UniProtKB-SubCell"/>
</dbReference>
<dbReference type="GO" id="GO:0030430">
    <property type="term" value="C:host cell cytoplasm"/>
    <property type="evidence" value="ECO:0007669"/>
    <property type="project" value="UniProtKB-SubCell"/>
</dbReference>
<dbReference type="GO" id="GO:0042025">
    <property type="term" value="C:host cell nucleus"/>
    <property type="evidence" value="ECO:0007669"/>
    <property type="project" value="UniProtKB-SubCell"/>
</dbReference>
<dbReference type="GO" id="GO:0052572">
    <property type="term" value="P:response to host immune response"/>
    <property type="evidence" value="ECO:0007669"/>
    <property type="project" value="TreeGrafter"/>
</dbReference>
<dbReference type="FunFam" id="1.20.1260.20:FF:000001">
    <property type="entry name" value="PPE family protein PPE41"/>
    <property type="match status" value="1"/>
</dbReference>
<dbReference type="Gene3D" id="1.20.1260.20">
    <property type="entry name" value="PPE superfamily"/>
    <property type="match status" value="1"/>
</dbReference>
<dbReference type="InterPro" id="IPR043641">
    <property type="entry name" value="PPE-PPW_C"/>
</dbReference>
<dbReference type="InterPro" id="IPR000030">
    <property type="entry name" value="PPE_dom"/>
</dbReference>
<dbReference type="InterPro" id="IPR038332">
    <property type="entry name" value="PPE_sf"/>
</dbReference>
<dbReference type="PANTHER" id="PTHR46766">
    <property type="entry name" value="GLUTAMINE-RICH PROTEIN 2"/>
    <property type="match status" value="1"/>
</dbReference>
<dbReference type="PANTHER" id="PTHR46766:SF1">
    <property type="entry name" value="GLUTAMINE-RICH PROTEIN 2"/>
    <property type="match status" value="1"/>
</dbReference>
<dbReference type="Pfam" id="PF00823">
    <property type="entry name" value="PPE"/>
    <property type="match status" value="1"/>
</dbReference>
<dbReference type="Pfam" id="PF18878">
    <property type="entry name" value="PPE-PPW"/>
    <property type="match status" value="1"/>
</dbReference>
<dbReference type="SUPFAM" id="SSF140459">
    <property type="entry name" value="PE/PPE dimer-like"/>
    <property type="match status" value="1"/>
</dbReference>
<evidence type="ECO:0000250" key="1">
    <source>
        <dbReference type="UniProtKB" id="P9WI47"/>
    </source>
</evidence>
<evidence type="ECO:0000256" key="2">
    <source>
        <dbReference type="SAM" id="MobiDB-lite"/>
    </source>
</evidence>
<evidence type="ECO:0000305" key="3"/>
<organism>
    <name type="scientific">Mycobacterium tuberculosis (strain CDC 1551 / Oshkosh)</name>
    <dbReference type="NCBI Taxonomy" id="83331"/>
    <lineage>
        <taxon>Bacteria</taxon>
        <taxon>Bacillati</taxon>
        <taxon>Actinomycetota</taxon>
        <taxon>Actinomycetes</taxon>
        <taxon>Mycobacteriales</taxon>
        <taxon>Mycobacteriaceae</taxon>
        <taxon>Mycobacterium</taxon>
        <taxon>Mycobacterium tuberculosis complex</taxon>
    </lineage>
</organism>
<reference key="1">
    <citation type="journal article" date="2002" name="J. Bacteriol.">
        <title>Whole-genome comparison of Mycobacterium tuberculosis clinical and laboratory strains.</title>
        <authorList>
            <person name="Fleischmann R.D."/>
            <person name="Alland D."/>
            <person name="Eisen J.A."/>
            <person name="Carpenter L."/>
            <person name="White O."/>
            <person name="Peterson J.D."/>
            <person name="DeBoy R.T."/>
            <person name="Dodson R.J."/>
            <person name="Gwinn M.L."/>
            <person name="Haft D.H."/>
            <person name="Hickey E.K."/>
            <person name="Kolonay J.F."/>
            <person name="Nelson W.C."/>
            <person name="Umayam L.A."/>
            <person name="Ermolaeva M.D."/>
            <person name="Salzberg S.L."/>
            <person name="Delcher A."/>
            <person name="Utterback T.R."/>
            <person name="Weidman J.F."/>
            <person name="Khouri H.M."/>
            <person name="Gill J."/>
            <person name="Mikula A."/>
            <person name="Bishai W."/>
            <person name="Jacobs W.R. Jr."/>
            <person name="Venter J.C."/>
            <person name="Fraser C.M."/>
        </authorList>
    </citation>
    <scope>NUCLEOTIDE SEQUENCE [LARGE SCALE GENOMIC DNA]</scope>
    <source>
        <strain>CDC 1551 / Oshkosh</strain>
    </source>
</reference>
<gene>
    <name type="primary">PPE2</name>
    <name type="ordered locus">MT0269</name>
</gene>
<sequence>MTAPIWMASPPEVHSALLSSGPGPGPLLVSAEGWHSLSIAYAETADELAALLAAVQAGTWDGPTAAVYVAAHTPYLAWLVQASANSAAMATRQETAATAYGTALAAMPTLAELGANHALHGVLMATNFFGINTIPIALNESDYARMWIQAATTMASYQAVSTAAVAAAPQTTPAPQIVKANAPTAASDEPNQVQEWLQWLQKIGYTDFYNNVIQPFINWLTNLPFLQAMFSGFDPWLPSLGNPLTFLSPANIAFALGYPMDIGSYVAFLSQTFAFIGADLAAAFASGNPATIAFTLMFTTVEAIGTIITDTIALVKTLLEQTLALLPAALPLLAAPLAPLTLAPASAAGGFAGLSGLAGLVGIPPSAPPVIPPVAAIAPSIPTPTPTPAPAPAPTAVTAPTPPLGPPPPPVTAPPPVTGAGIQSFGYLVGDLNSAAQARKAVGTGVRKKTPEPDSAEAPASAAAPEEQVQPQRRRRPKIKQLGRGYEYLDLDPETGHDPTGSPQGAGTLGFAGTTHKASPGQVAGLITLPNDAFGGSPRTPMMPGTWDTDSATRVE</sequence>
<name>PPE02_MYCTO</name>
<protein>
    <recommendedName>
        <fullName evidence="1">PPE family protein PPE2</fullName>
    </recommendedName>
</protein>
<keyword id="KW-1035">Host cytoplasm</keyword>
<keyword id="KW-1048">Host nucleus</keyword>
<keyword id="KW-1185">Reference proteome</keyword>
<keyword id="KW-0964">Secreted</keyword>
<keyword id="KW-0843">Virulence</keyword>
<proteinExistence type="inferred from homology"/>
<comment type="function">
    <text evidence="1">Inhibits nitric oxide (NO) production in activated macrophages. Acts by inhibiting expression of the host inducible nitric oxide synthase (iNOS). PPE2 is translocated into the host macrophage nucleus, where it interacts with a GATA-binding site overlapping with the TATA box of NOS2 (iNOS) promoter, and strongly inhibits NOS2 gene transcription. Reduction in NO production in turn facilitates intracellular survival of the bacilli inside the macrophage. In addition, disrupts the assembly of NADPH oxidase complex, which inhibits NADPH oxidase-mediated reactive oxygen species (ROS) generation in macrophages and favors M.tuberculosis survival. Acts by interacting with NCF2, the cytosolic subunit of NADPH oxidase, and preventing translocation of NCF2 and NCF1 to the membrane, which causes a reduction of the functional assembly of NADPH oxidase complex and a decrease in NADPH oxidase activity.</text>
</comment>
<comment type="subcellular location">
    <subcellularLocation>
        <location evidence="1">Secreted</location>
    </subcellularLocation>
    <subcellularLocation>
        <location evidence="1">Host cytoplasm</location>
    </subcellularLocation>
    <subcellularLocation>
        <location evidence="1">Host nucleus</location>
    </subcellularLocation>
</comment>
<comment type="domain">
    <text evidence="1">Contains a conserved PPE N-terminal domain and a variable C-terminal domain. The C-terminal region includes a SH3-like region, a leucine zipper DNA-binding motif and a functional nuclear localization signal (NLS).</text>
</comment>
<comment type="similarity">
    <text evidence="3">Belongs to the mycobacterial PPE family.</text>
</comment>